<protein>
    <recommendedName>
        <fullName evidence="1">Phosphoenolpyruvate carboxykinase (ATP)</fullName>
        <shortName evidence="1">PCK</shortName>
        <shortName evidence="1">PEP carboxykinase</shortName>
        <shortName evidence="1">PEPCK</shortName>
        <ecNumber evidence="1">4.1.1.49</ecNumber>
    </recommendedName>
</protein>
<reference key="1">
    <citation type="journal article" date="2006" name="Proc. Natl. Acad. Sci. U.S.A.">
        <title>The partitioned Rhizobium etli genome: genetic and metabolic redundancy in seven interacting replicons.</title>
        <authorList>
            <person name="Gonzalez V."/>
            <person name="Santamaria R.I."/>
            <person name="Bustos P."/>
            <person name="Hernandez-Gonzalez I."/>
            <person name="Medrano-Soto A."/>
            <person name="Moreno-Hagelsieb G."/>
            <person name="Janga S.C."/>
            <person name="Ramirez M.A."/>
            <person name="Jimenez-Jacinto V."/>
            <person name="Collado-Vides J."/>
            <person name="Davila G."/>
        </authorList>
    </citation>
    <scope>NUCLEOTIDE SEQUENCE [LARGE SCALE GENOMIC DNA]</scope>
    <source>
        <strain>ATCC 51251 / DSM 11541 / JCM 21823 / NBRC 15573 / CFN 42</strain>
    </source>
</reference>
<name>PCKA_RHIEC</name>
<dbReference type="EC" id="4.1.1.49" evidence="1"/>
<dbReference type="EMBL" id="CP000133">
    <property type="protein sequence ID" value="ABC88870.1"/>
    <property type="molecule type" value="Genomic_DNA"/>
</dbReference>
<dbReference type="RefSeq" id="WP_011423441.1">
    <property type="nucleotide sequence ID" value="NC_007761.1"/>
</dbReference>
<dbReference type="SMR" id="Q2KE66"/>
<dbReference type="KEGG" id="ret:RHE_CH00037"/>
<dbReference type="eggNOG" id="COG1866">
    <property type="taxonomic scope" value="Bacteria"/>
</dbReference>
<dbReference type="HOGENOM" id="CLU_018247_0_1_5"/>
<dbReference type="OrthoDB" id="9806325at2"/>
<dbReference type="UniPathway" id="UPA00138"/>
<dbReference type="Proteomes" id="UP000001936">
    <property type="component" value="Chromosome"/>
</dbReference>
<dbReference type="GO" id="GO:0005829">
    <property type="term" value="C:cytosol"/>
    <property type="evidence" value="ECO:0007669"/>
    <property type="project" value="TreeGrafter"/>
</dbReference>
<dbReference type="GO" id="GO:0005524">
    <property type="term" value="F:ATP binding"/>
    <property type="evidence" value="ECO:0007669"/>
    <property type="project" value="UniProtKB-UniRule"/>
</dbReference>
<dbReference type="GO" id="GO:0046872">
    <property type="term" value="F:metal ion binding"/>
    <property type="evidence" value="ECO:0007669"/>
    <property type="project" value="UniProtKB-KW"/>
</dbReference>
<dbReference type="GO" id="GO:0004612">
    <property type="term" value="F:phosphoenolpyruvate carboxykinase (ATP) activity"/>
    <property type="evidence" value="ECO:0007669"/>
    <property type="project" value="UniProtKB-UniRule"/>
</dbReference>
<dbReference type="GO" id="GO:0006094">
    <property type="term" value="P:gluconeogenesis"/>
    <property type="evidence" value="ECO:0007669"/>
    <property type="project" value="UniProtKB-UniRule"/>
</dbReference>
<dbReference type="CDD" id="cd00484">
    <property type="entry name" value="PEPCK_ATP"/>
    <property type="match status" value="1"/>
</dbReference>
<dbReference type="Gene3D" id="3.90.228.20">
    <property type="match status" value="1"/>
</dbReference>
<dbReference type="Gene3D" id="3.40.449.10">
    <property type="entry name" value="Phosphoenolpyruvate Carboxykinase, domain 1"/>
    <property type="match status" value="1"/>
</dbReference>
<dbReference type="Gene3D" id="2.170.8.10">
    <property type="entry name" value="Phosphoenolpyruvate Carboxykinase, domain 2"/>
    <property type="match status" value="1"/>
</dbReference>
<dbReference type="HAMAP" id="MF_00453">
    <property type="entry name" value="PEPCK_ATP"/>
    <property type="match status" value="1"/>
</dbReference>
<dbReference type="InterPro" id="IPR001272">
    <property type="entry name" value="PEP_carboxykinase_ATP"/>
</dbReference>
<dbReference type="InterPro" id="IPR013035">
    <property type="entry name" value="PEP_carboxykinase_C"/>
</dbReference>
<dbReference type="InterPro" id="IPR008210">
    <property type="entry name" value="PEP_carboxykinase_N"/>
</dbReference>
<dbReference type="InterPro" id="IPR015994">
    <property type="entry name" value="PEPCK_ATP_CS"/>
</dbReference>
<dbReference type="NCBIfam" id="TIGR00224">
    <property type="entry name" value="pckA"/>
    <property type="match status" value="1"/>
</dbReference>
<dbReference type="NCBIfam" id="NF006820">
    <property type="entry name" value="PRK09344.1-2"/>
    <property type="match status" value="1"/>
</dbReference>
<dbReference type="NCBIfam" id="NF006821">
    <property type="entry name" value="PRK09344.1-3"/>
    <property type="match status" value="1"/>
</dbReference>
<dbReference type="NCBIfam" id="NF006822">
    <property type="entry name" value="PRK09344.1-4"/>
    <property type="match status" value="1"/>
</dbReference>
<dbReference type="PANTHER" id="PTHR30031:SF0">
    <property type="entry name" value="PHOSPHOENOLPYRUVATE CARBOXYKINASE (ATP)"/>
    <property type="match status" value="1"/>
</dbReference>
<dbReference type="PANTHER" id="PTHR30031">
    <property type="entry name" value="PHOSPHOENOLPYRUVATE CARBOXYKINASE ATP"/>
    <property type="match status" value="1"/>
</dbReference>
<dbReference type="Pfam" id="PF01293">
    <property type="entry name" value="PEPCK_ATP"/>
    <property type="match status" value="1"/>
</dbReference>
<dbReference type="PIRSF" id="PIRSF006294">
    <property type="entry name" value="PEP_crbxkin"/>
    <property type="match status" value="1"/>
</dbReference>
<dbReference type="SUPFAM" id="SSF68923">
    <property type="entry name" value="PEP carboxykinase N-terminal domain"/>
    <property type="match status" value="1"/>
</dbReference>
<dbReference type="SUPFAM" id="SSF53795">
    <property type="entry name" value="PEP carboxykinase-like"/>
    <property type="match status" value="1"/>
</dbReference>
<dbReference type="PROSITE" id="PS00532">
    <property type="entry name" value="PEPCK_ATP"/>
    <property type="match status" value="1"/>
</dbReference>
<gene>
    <name evidence="1" type="primary">pckA</name>
    <name type="ordered locus">RHE_CH00037</name>
</gene>
<keyword id="KW-0067">ATP-binding</keyword>
<keyword id="KW-0963">Cytoplasm</keyword>
<keyword id="KW-0210">Decarboxylase</keyword>
<keyword id="KW-0312">Gluconeogenesis</keyword>
<keyword id="KW-0456">Lyase</keyword>
<keyword id="KW-0464">Manganese</keyword>
<keyword id="KW-0479">Metal-binding</keyword>
<keyword id="KW-0547">Nucleotide-binding</keyword>
<keyword id="KW-1185">Reference proteome</keyword>
<organism>
    <name type="scientific">Rhizobium etli (strain ATCC 51251 / DSM 11541 / JCM 21823 / NBRC 15573 / CFN 42)</name>
    <dbReference type="NCBI Taxonomy" id="347834"/>
    <lineage>
        <taxon>Bacteria</taxon>
        <taxon>Pseudomonadati</taxon>
        <taxon>Pseudomonadota</taxon>
        <taxon>Alphaproteobacteria</taxon>
        <taxon>Hyphomicrobiales</taxon>
        <taxon>Rhizobiaceae</taxon>
        <taxon>Rhizobium/Agrobacterium group</taxon>
        <taxon>Rhizobium</taxon>
    </lineage>
</organism>
<accession>Q2KE66</accession>
<comment type="function">
    <text evidence="1">Involved in the gluconeogenesis. Catalyzes the conversion of oxaloacetate (OAA) to phosphoenolpyruvate (PEP) through direct phosphoryl transfer between the nucleoside triphosphate and OAA.</text>
</comment>
<comment type="catalytic activity">
    <reaction evidence="1">
        <text>oxaloacetate + ATP = phosphoenolpyruvate + ADP + CO2</text>
        <dbReference type="Rhea" id="RHEA:18617"/>
        <dbReference type="ChEBI" id="CHEBI:16452"/>
        <dbReference type="ChEBI" id="CHEBI:16526"/>
        <dbReference type="ChEBI" id="CHEBI:30616"/>
        <dbReference type="ChEBI" id="CHEBI:58702"/>
        <dbReference type="ChEBI" id="CHEBI:456216"/>
        <dbReference type="EC" id="4.1.1.49"/>
    </reaction>
</comment>
<comment type="cofactor">
    <cofactor evidence="1">
        <name>Mn(2+)</name>
        <dbReference type="ChEBI" id="CHEBI:29035"/>
    </cofactor>
    <text evidence="1">Binds 1 Mn(2+) ion per subunit.</text>
</comment>
<comment type="pathway">
    <text evidence="1">Carbohydrate biosynthesis; gluconeogenesis.</text>
</comment>
<comment type="subcellular location">
    <subcellularLocation>
        <location evidence="1">Cytoplasm</location>
    </subcellularLocation>
</comment>
<comment type="similarity">
    <text evidence="1">Belongs to the phosphoenolpyruvate carboxykinase (ATP) family.</text>
</comment>
<proteinExistence type="inferred from homology"/>
<feature type="chain" id="PRO_1000060306" description="Phosphoenolpyruvate carboxykinase (ATP)">
    <location>
        <begin position="1"/>
        <end position="536"/>
    </location>
</feature>
<feature type="binding site" evidence="1">
    <location>
        <position position="61"/>
    </location>
    <ligand>
        <name>substrate</name>
    </ligand>
</feature>
<feature type="binding site" evidence="1">
    <location>
        <position position="195"/>
    </location>
    <ligand>
        <name>substrate</name>
    </ligand>
</feature>
<feature type="binding site" evidence="1">
    <location>
        <position position="201"/>
    </location>
    <ligand>
        <name>ATP</name>
        <dbReference type="ChEBI" id="CHEBI:30616"/>
    </ligand>
</feature>
<feature type="binding site" evidence="1">
    <location>
        <position position="201"/>
    </location>
    <ligand>
        <name>Mn(2+)</name>
        <dbReference type="ChEBI" id="CHEBI:29035"/>
    </ligand>
</feature>
<feature type="binding site" evidence="1">
    <location>
        <position position="201"/>
    </location>
    <ligand>
        <name>substrate</name>
    </ligand>
</feature>
<feature type="binding site" evidence="1">
    <location>
        <position position="220"/>
    </location>
    <ligand>
        <name>ATP</name>
        <dbReference type="ChEBI" id="CHEBI:30616"/>
    </ligand>
</feature>
<feature type="binding site" evidence="1">
    <location>
        <position position="220"/>
    </location>
    <ligand>
        <name>Mn(2+)</name>
        <dbReference type="ChEBI" id="CHEBI:29035"/>
    </ligand>
</feature>
<feature type="binding site" evidence="1">
    <location>
        <begin position="236"/>
        <end position="244"/>
    </location>
    <ligand>
        <name>ATP</name>
        <dbReference type="ChEBI" id="CHEBI:30616"/>
    </ligand>
</feature>
<feature type="binding site" evidence="1">
    <location>
        <position position="257"/>
    </location>
    <ligand>
        <name>Mn(2+)</name>
        <dbReference type="ChEBI" id="CHEBI:29035"/>
    </ligand>
</feature>
<feature type="binding site" evidence="1">
    <location>
        <position position="285"/>
    </location>
    <ligand>
        <name>ATP</name>
        <dbReference type="ChEBI" id="CHEBI:30616"/>
    </ligand>
</feature>
<feature type="binding site" evidence="1">
    <location>
        <position position="322"/>
    </location>
    <ligand>
        <name>ATP</name>
        <dbReference type="ChEBI" id="CHEBI:30616"/>
    </ligand>
</feature>
<feature type="binding site" evidence="1">
    <location>
        <position position="322"/>
    </location>
    <ligand>
        <name>substrate</name>
    </ligand>
</feature>
<feature type="binding site" evidence="1">
    <location>
        <position position="447"/>
    </location>
    <ligand>
        <name>ATP</name>
        <dbReference type="ChEBI" id="CHEBI:30616"/>
    </ligand>
</feature>
<sequence length="536" mass="57562">MEKFGVHNPATELATVGLGGAASVRYNFSAAALYEEAIRRGEAELTAQGALRALTGQHTGRSPRDKFVVRDANTDGQIWWDNNKPLSPEHFALLRDDMLAHAAGKDLFAQDLVGGAEEGHALPTRVITELAWHSLFIRNLLIRPEAAALPTFVPKLTIIDLPSFKADPARHGCRSETVIACDLTNGLVLIGGTSYAGEMKKSVFTVLNYLLPAKGVMPMHCSANVGPDGDAAVFFGLSGTGKTTLSADPARTLIGDDEHGWSENGIFNFEGGCYAKTIRLSAEAEPEIYATTQRFGTVLENVVLNERREPDFDDGSLTENTRCAYPMHFIPNASETGRAGHPKTIIMLTADAFGVMPPIARLTPDQAMYHFLSGYTAKVAGTEKGVVEPEATFSTCFGAPFMPRHPAEYGNLLKELISRHGVECWLVNTGWTGGAYGTGKRMPIKATRGLLAAALSGKLGQLQFRTDTNFGFAVPVSVDGVDGSILDPRSTWADKAAYDAQAEKLVSMFIANFAKFEDHVDGGVRDAAPGVKAAAE</sequence>
<evidence type="ECO:0000255" key="1">
    <source>
        <dbReference type="HAMAP-Rule" id="MF_00453"/>
    </source>
</evidence>